<keyword id="KW-0325">Glycoprotein</keyword>
<keyword id="KW-0378">Hydrolase</keyword>
<keyword id="KW-0479">Metal-binding</keyword>
<keyword id="KW-0482">Metalloprotease</keyword>
<keyword id="KW-0645">Protease</keyword>
<keyword id="KW-0964">Secreted</keyword>
<keyword id="KW-0732">Signal</keyword>
<keyword id="KW-0862">Zinc</keyword>
<keyword id="KW-0865">Zymogen</keyword>
<protein>
    <recommendedName>
        <fullName>Extracellular metalloproteinase 10</fullName>
        <ecNumber>3.4.24.-</ecNumber>
    </recommendedName>
    <alternativeName>
        <fullName>Elastinolytic metalloproteinase MEP10</fullName>
    </alternativeName>
    <alternativeName>
        <fullName>Fungalysin MEP10</fullName>
    </alternativeName>
</protein>
<comment type="function">
    <text evidence="1">Secreted metalloproteinase that allows assimilation of proteinaceous substrates and probably acts as a virulence factor.</text>
</comment>
<comment type="cofactor">
    <cofactor evidence="1">
        <name>Zn(2+)</name>
        <dbReference type="ChEBI" id="CHEBI:29105"/>
    </cofactor>
    <text evidence="1">Binds 1 zinc ion per subunit.</text>
</comment>
<comment type="subcellular location">
    <subcellularLocation>
        <location evidence="1">Secreted</location>
    </subcellularLocation>
</comment>
<comment type="similarity">
    <text evidence="4">Belongs to the peptidase M36 family.</text>
</comment>
<proteinExistence type="inferred from homology"/>
<reference key="1">
    <citation type="journal article" date="2005" name="Infect. Immun.">
        <title>A metalloproteinase of Coccidioides posadasii contributes to evasion of host detection.</title>
        <authorList>
            <person name="Hung C.Y."/>
            <person name="Seshan K.R."/>
            <person name="Yu J.J."/>
            <person name="Schaller R."/>
            <person name="Xue J."/>
            <person name="Basrur V."/>
            <person name="Gardner M.J."/>
            <person name="Cole G.T."/>
        </authorList>
    </citation>
    <scope>NUCLEOTIDE SEQUENCE [GENOMIC DNA]</scope>
    <source>
        <strain>C735</strain>
    </source>
</reference>
<reference key="2">
    <citation type="journal article" date="2009" name="Genome Res.">
        <title>Comparative genomic analyses of the human fungal pathogens Coccidioides and their relatives.</title>
        <authorList>
            <person name="Sharpton T.J."/>
            <person name="Stajich J.E."/>
            <person name="Rounsley S.D."/>
            <person name="Gardner M.J."/>
            <person name="Wortman J.R."/>
            <person name="Jordar V.S."/>
            <person name="Maiti R."/>
            <person name="Kodira C.D."/>
            <person name="Neafsey D.E."/>
            <person name="Zeng Q."/>
            <person name="Hung C.-Y."/>
            <person name="McMahan C."/>
            <person name="Muszewska A."/>
            <person name="Grynberg M."/>
            <person name="Mandel M.A."/>
            <person name="Kellner E.M."/>
            <person name="Barker B.M."/>
            <person name="Galgiani J.N."/>
            <person name="Orbach M.J."/>
            <person name="Kirkland T.N."/>
            <person name="Cole G.T."/>
            <person name="Henn M.R."/>
            <person name="Birren B.W."/>
            <person name="Taylor J.W."/>
        </authorList>
    </citation>
    <scope>NUCLEOTIDE SEQUENCE [LARGE SCALE GENOMIC DNA]</scope>
    <source>
        <strain>C735</strain>
    </source>
</reference>
<accession>C5P7A7</accession>
<accession>Q3KRQ3</accession>
<dbReference type="EC" id="3.4.24.-"/>
<dbReference type="EMBL" id="AY987814">
    <property type="protein sequence ID" value="AAY45760.1"/>
    <property type="molecule type" value="Genomic_DNA"/>
</dbReference>
<dbReference type="EMBL" id="ACFW01000025">
    <property type="protein sequence ID" value="EER27307.1"/>
    <property type="molecule type" value="Genomic_DNA"/>
</dbReference>
<dbReference type="RefSeq" id="XP_003069452.1">
    <property type="nucleotide sequence ID" value="XM_003069406.1"/>
</dbReference>
<dbReference type="SMR" id="C5P7A7"/>
<dbReference type="MEROPS" id="M36.001"/>
<dbReference type="GlyCosmos" id="C5P7A7">
    <property type="glycosylation" value="4 sites, No reported glycans"/>
</dbReference>
<dbReference type="KEGG" id="cpw:9694947"/>
<dbReference type="VEuPathDB" id="FungiDB:CPC735_026430"/>
<dbReference type="HOGENOM" id="CLU_012703_3_0_1"/>
<dbReference type="OrthoDB" id="3227768at2759"/>
<dbReference type="Proteomes" id="UP000009084">
    <property type="component" value="Unassembled WGS sequence"/>
</dbReference>
<dbReference type="GO" id="GO:0005576">
    <property type="term" value="C:extracellular region"/>
    <property type="evidence" value="ECO:0007669"/>
    <property type="project" value="UniProtKB-SubCell"/>
</dbReference>
<dbReference type="GO" id="GO:0004222">
    <property type="term" value="F:metalloendopeptidase activity"/>
    <property type="evidence" value="ECO:0007669"/>
    <property type="project" value="InterPro"/>
</dbReference>
<dbReference type="GO" id="GO:0008270">
    <property type="term" value="F:zinc ion binding"/>
    <property type="evidence" value="ECO:0007669"/>
    <property type="project" value="InterPro"/>
</dbReference>
<dbReference type="GO" id="GO:0006508">
    <property type="term" value="P:proteolysis"/>
    <property type="evidence" value="ECO:0007669"/>
    <property type="project" value="UniProtKB-KW"/>
</dbReference>
<dbReference type="CDD" id="cd09596">
    <property type="entry name" value="M36"/>
    <property type="match status" value="1"/>
</dbReference>
<dbReference type="Gene3D" id="3.10.170.10">
    <property type="match status" value="1"/>
</dbReference>
<dbReference type="Gene3D" id="1.10.390.10">
    <property type="entry name" value="Neutral Protease Domain 2"/>
    <property type="match status" value="1"/>
</dbReference>
<dbReference type="InterPro" id="IPR011096">
    <property type="entry name" value="FTP_domain"/>
</dbReference>
<dbReference type="InterPro" id="IPR050371">
    <property type="entry name" value="Fungal_virulence_M36"/>
</dbReference>
<dbReference type="InterPro" id="IPR001842">
    <property type="entry name" value="Peptidase_M36"/>
</dbReference>
<dbReference type="InterPro" id="IPR027268">
    <property type="entry name" value="Peptidase_M4/M1_CTD_sf"/>
</dbReference>
<dbReference type="PANTHER" id="PTHR33478">
    <property type="entry name" value="EXTRACELLULAR METALLOPROTEINASE MEP"/>
    <property type="match status" value="1"/>
</dbReference>
<dbReference type="PANTHER" id="PTHR33478:SF1">
    <property type="entry name" value="EXTRACELLULAR METALLOPROTEINASE MEP"/>
    <property type="match status" value="1"/>
</dbReference>
<dbReference type="Pfam" id="PF07504">
    <property type="entry name" value="FTP"/>
    <property type="match status" value="1"/>
</dbReference>
<dbReference type="Pfam" id="PF02128">
    <property type="entry name" value="Peptidase_M36"/>
    <property type="match status" value="1"/>
</dbReference>
<dbReference type="PRINTS" id="PR00999">
    <property type="entry name" value="FUNGALYSIN"/>
</dbReference>
<dbReference type="SUPFAM" id="SSF55486">
    <property type="entry name" value="Metalloproteases ('zincins'), catalytic domain"/>
    <property type="match status" value="1"/>
</dbReference>
<dbReference type="PROSITE" id="PS00142">
    <property type="entry name" value="ZINC_PROTEASE"/>
    <property type="match status" value="1"/>
</dbReference>
<name>MEP10_COCP7</name>
<organism>
    <name type="scientific">Coccidioides posadasii (strain C735)</name>
    <name type="common">Valley fever fungus</name>
    <dbReference type="NCBI Taxonomy" id="222929"/>
    <lineage>
        <taxon>Eukaryota</taxon>
        <taxon>Fungi</taxon>
        <taxon>Dikarya</taxon>
        <taxon>Ascomycota</taxon>
        <taxon>Pezizomycotina</taxon>
        <taxon>Eurotiomycetes</taxon>
        <taxon>Eurotiomycetidae</taxon>
        <taxon>Onygenales</taxon>
        <taxon>Onygenaceae</taxon>
        <taxon>Coccidioides</taxon>
    </lineage>
</organism>
<gene>
    <name type="primary">MEP10</name>
    <name type="ORF">CPC735_026430</name>
</gene>
<feature type="signal peptide" evidence="2">
    <location>
        <begin position="1"/>
        <end position="19"/>
    </location>
</feature>
<feature type="chain" id="PRO_0000407148" description="Extracellular metalloproteinase 10">
    <location>
        <begin position="20"/>
        <end position="629"/>
    </location>
</feature>
<feature type="propeptide" id="PRO_0000407149" evidence="1">
    <location>
        <begin position="20"/>
        <end position="240"/>
    </location>
</feature>
<feature type="active site" evidence="3">
    <location>
        <position position="425"/>
    </location>
</feature>
<feature type="binding site" evidence="3">
    <location>
        <position position="424"/>
    </location>
    <ligand>
        <name>Zn(2+)</name>
        <dbReference type="ChEBI" id="CHEBI:29105"/>
        <note>catalytic</note>
    </ligand>
</feature>
<feature type="binding site" evidence="3">
    <location>
        <position position="428"/>
    </location>
    <ligand>
        <name>Zn(2+)</name>
        <dbReference type="ChEBI" id="CHEBI:29105"/>
        <note>catalytic</note>
    </ligand>
</feature>
<feature type="glycosylation site" description="N-linked (GlcNAc...) asparagine" evidence="2">
    <location>
        <position position="281"/>
    </location>
</feature>
<feature type="glycosylation site" description="N-linked (GlcNAc...) asparagine" evidence="2">
    <location>
        <position position="331"/>
    </location>
</feature>
<feature type="glycosylation site" description="N-linked (GlcNAc...) asparagine" evidence="2">
    <location>
        <position position="469"/>
    </location>
</feature>
<feature type="glycosylation site" description="N-linked (GlcNAc...) asparagine" evidence="2">
    <location>
        <position position="617"/>
    </location>
</feature>
<sequence length="629" mass="69424">MHGLLLAAGLLSLPLYTIAHTQPSGALSRRGVDLDAYRLPEKSSYTNTNDVQENSAILSLNAGSYVDVATKLVKQTIPSATFRVVDDHYISDTGLGHVYFRQTINGLDVDNADFNVNVGKDGKIFSFGNSFYTGKVPSASLTRDHSDPIQALNGARKALKLPVKTEKATARATNRGEYMFKGTSGALSEPTAKLVYIVKDDGSLALTWRVETDIGDNWLLSYVDAKDSDKVHNVVDYVAHATYQVYPWGINDPTEGSRQVFKDPWELPASPFTWISDGRQNYTTTRGNNGIAQNNPDGGTEYLNNYRPNSRNLRFEYRYSPSMNPPKSYTNASITQLFYSANTYHDLLYTLGFTEEAGNFQVSNGNRGGKGNDYVILNAQDGSGTNNANFATPPDGRPGRMRMYIWTRANPPRDGCFEAGIVIHEYTHGLSNRLTGGPDNTRCLNGLESGGMGEGWGDFYATAVRLKRNDTRNTVYAKSAWASNNPGGVRAYPYSTDFEINPLTYTSVNQLNEVHAVGTVWATMLYELLWNLIDKHGKNDGPKPVFRDGVPTDGKYLAMKIVLDGMKIQPCNPNFVQARDAILDADKALTGGENKCEIWTAFAKRELGTGARYNRNNRTGSKEVPNECK</sequence>
<evidence type="ECO:0000250" key="1"/>
<evidence type="ECO:0000255" key="2"/>
<evidence type="ECO:0000255" key="3">
    <source>
        <dbReference type="PROSITE-ProRule" id="PRU10095"/>
    </source>
</evidence>
<evidence type="ECO:0000305" key="4"/>